<reference key="1">
    <citation type="journal article" date="1996" name="DNA Res.">
        <title>A 570-kb DNA sequence of the Escherichia coli K-12 genome corresponding to the 28.0-40.1 min region on the linkage map.</title>
        <authorList>
            <person name="Aiba H."/>
            <person name="Baba T."/>
            <person name="Fujita K."/>
            <person name="Hayashi K."/>
            <person name="Inada T."/>
            <person name="Isono K."/>
            <person name="Itoh T."/>
            <person name="Kasai H."/>
            <person name="Kashimoto K."/>
            <person name="Kimura S."/>
            <person name="Kitakawa M."/>
            <person name="Kitagawa M."/>
            <person name="Makino K."/>
            <person name="Miki T."/>
            <person name="Mizobuchi K."/>
            <person name="Mori H."/>
            <person name="Mori T."/>
            <person name="Motomura K."/>
            <person name="Nakade S."/>
            <person name="Nakamura Y."/>
            <person name="Nashimoto H."/>
            <person name="Nishio Y."/>
            <person name="Oshima T."/>
            <person name="Saito N."/>
            <person name="Sampei G."/>
            <person name="Seki Y."/>
            <person name="Sivasundaram S."/>
            <person name="Tagami H."/>
            <person name="Takeda J."/>
            <person name="Takemoto K."/>
            <person name="Takeuchi Y."/>
            <person name="Wada C."/>
            <person name="Yamamoto Y."/>
            <person name="Horiuchi T."/>
        </authorList>
    </citation>
    <scope>NUCLEOTIDE SEQUENCE [LARGE SCALE GENOMIC DNA]</scope>
    <source>
        <strain>K12 / W3110 / ATCC 27325 / DSM 5911</strain>
    </source>
</reference>
<reference key="2">
    <citation type="journal article" date="1997" name="Science">
        <title>The complete genome sequence of Escherichia coli K-12.</title>
        <authorList>
            <person name="Blattner F.R."/>
            <person name="Plunkett G. III"/>
            <person name="Bloch C.A."/>
            <person name="Perna N.T."/>
            <person name="Burland V."/>
            <person name="Riley M."/>
            <person name="Collado-Vides J."/>
            <person name="Glasner J.D."/>
            <person name="Rode C.K."/>
            <person name="Mayhew G.F."/>
            <person name="Gregor J."/>
            <person name="Davis N.W."/>
            <person name="Kirkpatrick H.A."/>
            <person name="Goeden M.A."/>
            <person name="Rose D.J."/>
            <person name="Mau B."/>
            <person name="Shao Y."/>
        </authorList>
    </citation>
    <scope>NUCLEOTIDE SEQUENCE [LARGE SCALE GENOMIC DNA]</scope>
    <source>
        <strain>K12 / MG1655 / ATCC 47076</strain>
    </source>
</reference>
<reference key="3">
    <citation type="journal article" date="2006" name="Mol. Syst. Biol.">
        <title>Highly accurate genome sequences of Escherichia coli K-12 strains MG1655 and W3110.</title>
        <authorList>
            <person name="Hayashi K."/>
            <person name="Morooka N."/>
            <person name="Yamamoto Y."/>
            <person name="Fujita K."/>
            <person name="Isono K."/>
            <person name="Choi S."/>
            <person name="Ohtsubo E."/>
            <person name="Baba T."/>
            <person name="Wanner B.L."/>
            <person name="Mori H."/>
            <person name="Horiuchi T."/>
        </authorList>
    </citation>
    <scope>NUCLEOTIDE SEQUENCE [LARGE SCALE GENOMIC DNA]</scope>
    <source>
        <strain>K12 / W3110 / ATCC 27325 / DSM 5911</strain>
    </source>
</reference>
<keyword id="KW-0229">DNA integration</keyword>
<keyword id="KW-0230">DNA invertase</keyword>
<keyword id="KW-0233">DNA recombination</keyword>
<keyword id="KW-0238">DNA-binding</keyword>
<keyword id="KW-0378">Hydrolase</keyword>
<keyword id="KW-0436">Ligase</keyword>
<keyword id="KW-1185">Reference proteome</keyword>
<accession>P77170</accession>
<dbReference type="EC" id="3.1.22.-"/>
<dbReference type="EC" id="6.5.1.-"/>
<dbReference type="EMBL" id="U00096">
    <property type="protein sequence ID" value="AAC74618.1"/>
    <property type="molecule type" value="Genomic_DNA"/>
</dbReference>
<dbReference type="EMBL" id="AP009048">
    <property type="protein sequence ID" value="BAA15249.1"/>
    <property type="molecule type" value="Genomic_DNA"/>
</dbReference>
<dbReference type="PIR" id="D64909">
    <property type="entry name" value="D64909"/>
</dbReference>
<dbReference type="RefSeq" id="NP_416063.1">
    <property type="nucleotide sequence ID" value="NC_000913.3"/>
</dbReference>
<dbReference type="RefSeq" id="WP_000078177.1">
    <property type="nucleotide sequence ID" value="NZ_LN832404.1"/>
</dbReference>
<dbReference type="SMR" id="P77170"/>
<dbReference type="BioGRID" id="4260217">
    <property type="interactions" value="202"/>
</dbReference>
<dbReference type="DIP" id="DIP-10508N"/>
<dbReference type="FunCoup" id="P77170">
    <property type="interactions" value="14"/>
</dbReference>
<dbReference type="IntAct" id="P77170">
    <property type="interactions" value="1"/>
</dbReference>
<dbReference type="STRING" id="511145.b1545"/>
<dbReference type="PaxDb" id="511145-b1545"/>
<dbReference type="EnsemblBacteria" id="AAC74618">
    <property type="protein sequence ID" value="AAC74618"/>
    <property type="gene ID" value="b1545"/>
</dbReference>
<dbReference type="GeneID" id="946088"/>
<dbReference type="KEGG" id="ecj:JW1538"/>
<dbReference type="KEGG" id="eco:b1545"/>
<dbReference type="KEGG" id="ecoc:C3026_08920"/>
<dbReference type="PATRIC" id="fig|511145.12.peg.1615"/>
<dbReference type="EchoBASE" id="EB3585"/>
<dbReference type="eggNOG" id="COG1961">
    <property type="taxonomic scope" value="Bacteria"/>
</dbReference>
<dbReference type="HOGENOM" id="CLU_010686_8_2_6"/>
<dbReference type="InParanoid" id="P77170"/>
<dbReference type="OMA" id="QRQMEGI"/>
<dbReference type="OrthoDB" id="9797501at2"/>
<dbReference type="PhylomeDB" id="P77170"/>
<dbReference type="BioCyc" id="EcoCyc:G6819-MONOMER"/>
<dbReference type="PRO" id="PR:P77170"/>
<dbReference type="Proteomes" id="UP000000625">
    <property type="component" value="Chromosome"/>
</dbReference>
<dbReference type="GO" id="GO:0003677">
    <property type="term" value="F:DNA binding"/>
    <property type="evidence" value="ECO:0007669"/>
    <property type="project" value="UniProtKB-KW"/>
</dbReference>
<dbReference type="GO" id="GO:0000150">
    <property type="term" value="F:DNA strand exchange activity"/>
    <property type="evidence" value="ECO:0000318"/>
    <property type="project" value="GO_Central"/>
</dbReference>
<dbReference type="GO" id="GO:0016787">
    <property type="term" value="F:hydrolase activity"/>
    <property type="evidence" value="ECO:0007669"/>
    <property type="project" value="UniProtKB-KW"/>
</dbReference>
<dbReference type="GO" id="GO:0016874">
    <property type="term" value="F:ligase activity"/>
    <property type="evidence" value="ECO:0007669"/>
    <property type="project" value="UniProtKB-KW"/>
</dbReference>
<dbReference type="GO" id="GO:0015074">
    <property type="term" value="P:DNA integration"/>
    <property type="evidence" value="ECO:0007669"/>
    <property type="project" value="UniProtKB-KW"/>
</dbReference>
<dbReference type="GO" id="GO:0006310">
    <property type="term" value="P:DNA recombination"/>
    <property type="evidence" value="ECO:0000318"/>
    <property type="project" value="GO_Central"/>
</dbReference>
<dbReference type="CDD" id="cd00569">
    <property type="entry name" value="HTH_Hin_like"/>
    <property type="match status" value="1"/>
</dbReference>
<dbReference type="CDD" id="cd03768">
    <property type="entry name" value="SR_ResInv"/>
    <property type="match status" value="1"/>
</dbReference>
<dbReference type="Gene3D" id="1.10.10.60">
    <property type="entry name" value="Homeodomain-like"/>
    <property type="match status" value="1"/>
</dbReference>
<dbReference type="Gene3D" id="3.40.50.1390">
    <property type="entry name" value="Resolvase, N-terminal catalytic domain"/>
    <property type="match status" value="1"/>
</dbReference>
<dbReference type="InterPro" id="IPR009057">
    <property type="entry name" value="Homeodomain-like_sf"/>
</dbReference>
<dbReference type="InterPro" id="IPR006118">
    <property type="entry name" value="Recombinase_CS"/>
</dbReference>
<dbReference type="InterPro" id="IPR006119">
    <property type="entry name" value="Resolv_N"/>
</dbReference>
<dbReference type="InterPro" id="IPR036162">
    <property type="entry name" value="Resolvase-like_N_sf"/>
</dbReference>
<dbReference type="InterPro" id="IPR006120">
    <property type="entry name" value="Resolvase_HTH_dom"/>
</dbReference>
<dbReference type="InterPro" id="IPR050639">
    <property type="entry name" value="SSR_resolvase"/>
</dbReference>
<dbReference type="PANTHER" id="PTHR30461">
    <property type="entry name" value="DNA-INVERTASE FROM LAMBDOID PROPHAGE"/>
    <property type="match status" value="1"/>
</dbReference>
<dbReference type="PANTHER" id="PTHR30461:SF2">
    <property type="entry name" value="SERINE RECOMBINASE PINE-RELATED"/>
    <property type="match status" value="1"/>
</dbReference>
<dbReference type="Pfam" id="PF02796">
    <property type="entry name" value="HTH_7"/>
    <property type="match status" value="1"/>
</dbReference>
<dbReference type="Pfam" id="PF00239">
    <property type="entry name" value="Resolvase"/>
    <property type="match status" value="1"/>
</dbReference>
<dbReference type="SMART" id="SM00857">
    <property type="entry name" value="Resolvase"/>
    <property type="match status" value="1"/>
</dbReference>
<dbReference type="SUPFAM" id="SSF46689">
    <property type="entry name" value="Homeodomain-like"/>
    <property type="match status" value="1"/>
</dbReference>
<dbReference type="SUPFAM" id="SSF53041">
    <property type="entry name" value="Resolvase-like"/>
    <property type="match status" value="1"/>
</dbReference>
<dbReference type="PROSITE" id="PS00398">
    <property type="entry name" value="RECOMBINASES_2"/>
    <property type="match status" value="1"/>
</dbReference>
<dbReference type="PROSITE" id="PS51736">
    <property type="entry name" value="RECOMBINASES_3"/>
    <property type="match status" value="1"/>
</dbReference>
<feature type="chain" id="PRO_0000196362" description="Serine recombinase PinQ">
    <location>
        <begin position="1"/>
        <end position="196"/>
    </location>
</feature>
<feature type="domain" description="Resolvase/invertase-type recombinase catalytic" evidence="2">
    <location>
        <begin position="3"/>
        <end position="143"/>
    </location>
</feature>
<feature type="active site" description="O-(5'-phospho-DNA)-serine intermediate" evidence="2">
    <location>
        <position position="11"/>
    </location>
</feature>
<organism>
    <name type="scientific">Escherichia coli (strain K12)</name>
    <dbReference type="NCBI Taxonomy" id="83333"/>
    <lineage>
        <taxon>Bacteria</taxon>
        <taxon>Pseudomonadati</taxon>
        <taxon>Pseudomonadota</taxon>
        <taxon>Gammaproteobacteria</taxon>
        <taxon>Enterobacterales</taxon>
        <taxon>Enterobacteriaceae</taxon>
        <taxon>Escherichia</taxon>
    </lineage>
</organism>
<evidence type="ECO:0000250" key="1">
    <source>
        <dbReference type="UniProtKB" id="P03015"/>
    </source>
</evidence>
<evidence type="ECO:0000255" key="2">
    <source>
        <dbReference type="PROSITE-ProRule" id="PRU01072"/>
    </source>
</evidence>
<evidence type="ECO:0000305" key="3"/>
<proteinExistence type="inferred from homology"/>
<protein>
    <recommendedName>
        <fullName evidence="1">Serine recombinase PinQ</fullName>
        <ecNumber>3.1.22.-</ecNumber>
        <ecNumber>6.5.1.-</ecNumber>
    </recommendedName>
    <alternativeName>
        <fullName evidence="3">DNA-invertase PinQ</fullName>
    </alternativeName>
    <alternativeName>
        <fullName>Putative DNA-invertase from lambdoid prophage Qin</fullName>
    </alternativeName>
    <alternativeName>
        <fullName evidence="3">Site-specific recombinase PinQ</fullName>
    </alternativeName>
</protein>
<name>PINQ_ECOLI</name>
<sequence>MSQIFAYCRISTLDQTTENQRREIESAGFKIKPQQIIEEHISGSAATSERPGFNRLLARLKCGDQLIVTKLDRLGCNAMDIRKTVEQLTETGIRVHCLALGGIDLTSPTGKMMMQVISAVAEFERDLLLERTHSGIVRARGAGKRFGRPPVLNEEQKQAVFERIKSGVSISAIAREFKTSRQTILRAKAKLQTPDI</sequence>
<gene>
    <name type="primary">pinQ</name>
    <name type="synonym">ydfL</name>
    <name type="ordered locus">b1545</name>
    <name type="ordered locus">JW1538</name>
</gene>
<comment type="similarity">
    <text evidence="3">Belongs to the site-specific recombinase resolvase family.</text>
</comment>